<protein>
    <recommendedName>
        <fullName evidence="1">C4-dicarboxylate transport protein</fullName>
    </recommendedName>
</protein>
<name>DCTA_CUPTR</name>
<reference key="1">
    <citation type="journal article" date="2008" name="Genome Res.">
        <title>Genome sequence of the beta-rhizobium Cupriavidus taiwanensis and comparative genomics of rhizobia.</title>
        <authorList>
            <person name="Amadou C."/>
            <person name="Pascal G."/>
            <person name="Mangenot S."/>
            <person name="Glew M."/>
            <person name="Bontemps C."/>
            <person name="Capela D."/>
            <person name="Carrere S."/>
            <person name="Cruveiller S."/>
            <person name="Dossat C."/>
            <person name="Lajus A."/>
            <person name="Marchetti M."/>
            <person name="Poinsot V."/>
            <person name="Rouy Z."/>
            <person name="Servin B."/>
            <person name="Saad M."/>
            <person name="Schenowitz C."/>
            <person name="Barbe V."/>
            <person name="Batut J."/>
            <person name="Medigue C."/>
            <person name="Masson-Boivin C."/>
        </authorList>
    </citation>
    <scope>NUCLEOTIDE SEQUENCE [LARGE SCALE GENOMIC DNA]</scope>
    <source>
        <strain>DSM 17343 / BCRC 17206 / CCUG 44338 / CIP 107171 / LMG 19424 / R1</strain>
    </source>
</reference>
<sequence>MRKPFYKILYVQVLFAICIGILLGHFWPDTGVAMKPLGDGFIKLIKMIIGPIIFCTVVTGIAGMSDMKKVGRVGGKALLYFEVVSTFALLIGLGAAHLLKPGVGFNIDPATLDTKAIAQYVSKAHGQSTVEFLMHIIPDTVFSAFANGDILQILLVSLFFGAALAVLGERARIVVQLIEQVSKVFFHIVHVITKVAPIGAFGAMAFTIGKYGLGSLVPLLKLIGTFYFTAIVFVLVVLGTIARMTGFSIVRFIAYIKEELLIVLGTSSSEAALPHMMEKLEKLGCSKSVVGLVVPTGYSFNLDGTNIYMTMAVIFIAQATGIELTLMQQLTILAVAMITSKGASGVTGSGFITLAATLAVVPTIPVAGMVLILGIDRFMSECRALTNIIGNGVATVVVSAWERELDRKRLARVLQHGAGDDADTLGEAGQRAA</sequence>
<organism>
    <name type="scientific">Cupriavidus taiwanensis (strain DSM 17343 / BCRC 17206 / CCUG 44338 / CIP 107171 / LMG 19424 / R1)</name>
    <name type="common">Ralstonia taiwanensis (strain LMG 19424)</name>
    <dbReference type="NCBI Taxonomy" id="977880"/>
    <lineage>
        <taxon>Bacteria</taxon>
        <taxon>Pseudomonadati</taxon>
        <taxon>Pseudomonadota</taxon>
        <taxon>Betaproteobacteria</taxon>
        <taxon>Burkholderiales</taxon>
        <taxon>Burkholderiaceae</taxon>
        <taxon>Cupriavidus</taxon>
    </lineage>
</organism>
<comment type="function">
    <text evidence="1">Responsible for the transport of dicarboxylates such as succinate, fumarate, and malate from the periplasm across the membrane.</text>
</comment>
<comment type="subcellular location">
    <subcellularLocation>
        <location evidence="1">Cell inner membrane</location>
        <topology evidence="1">Multi-pass membrane protein</topology>
    </subcellularLocation>
</comment>
<comment type="similarity">
    <text evidence="1">Belongs to the dicarboxylate/amino acid:cation symporter (DAACS) (TC 2.A.23) family.</text>
</comment>
<accession>B2AGL2</accession>
<evidence type="ECO:0000255" key="1">
    <source>
        <dbReference type="HAMAP-Rule" id="MF_01300"/>
    </source>
</evidence>
<keyword id="KW-0997">Cell inner membrane</keyword>
<keyword id="KW-1003">Cell membrane</keyword>
<keyword id="KW-0472">Membrane</keyword>
<keyword id="KW-0769">Symport</keyword>
<keyword id="KW-0812">Transmembrane</keyword>
<keyword id="KW-1133">Transmembrane helix</keyword>
<keyword id="KW-0813">Transport</keyword>
<gene>
    <name evidence="1" type="primary">dctA</name>
    <name type="ordered locus">RALTA_A0240</name>
</gene>
<feature type="chain" id="PRO_1000140448" description="C4-dicarboxylate transport protein">
    <location>
        <begin position="1"/>
        <end position="433"/>
    </location>
</feature>
<feature type="transmembrane region" description="Helical" evidence="1">
    <location>
        <begin position="8"/>
        <end position="28"/>
    </location>
</feature>
<feature type="transmembrane region" description="Helical" evidence="1">
    <location>
        <begin position="44"/>
        <end position="64"/>
    </location>
</feature>
<feature type="transmembrane region" description="Helical" evidence="1">
    <location>
        <begin position="78"/>
        <end position="98"/>
    </location>
</feature>
<feature type="transmembrane region" description="Helical" evidence="1">
    <location>
        <begin position="148"/>
        <end position="168"/>
    </location>
</feature>
<feature type="transmembrane region" description="Helical" evidence="1">
    <location>
        <begin position="188"/>
        <end position="208"/>
    </location>
</feature>
<feature type="transmembrane region" description="Helical" evidence="1">
    <location>
        <begin position="222"/>
        <end position="242"/>
    </location>
</feature>
<feature type="transmembrane region" description="Helical" evidence="1">
    <location>
        <begin position="307"/>
        <end position="327"/>
    </location>
</feature>
<feature type="transmembrane region" description="Helical" evidence="1">
    <location>
        <begin position="355"/>
        <end position="375"/>
    </location>
</feature>
<proteinExistence type="inferred from homology"/>
<dbReference type="EMBL" id="CU633749">
    <property type="protein sequence ID" value="CAP62911.1"/>
    <property type="molecule type" value="Genomic_DNA"/>
</dbReference>
<dbReference type="RefSeq" id="WP_012351579.1">
    <property type="nucleotide sequence ID" value="NC_010528.1"/>
</dbReference>
<dbReference type="SMR" id="B2AGL2"/>
<dbReference type="GeneID" id="29761825"/>
<dbReference type="KEGG" id="cti:RALTA_A0240"/>
<dbReference type="eggNOG" id="COG1301">
    <property type="taxonomic scope" value="Bacteria"/>
</dbReference>
<dbReference type="HOGENOM" id="CLU_019375_7_0_4"/>
<dbReference type="BioCyc" id="CTAI977880:RALTA_RS01185-MONOMER"/>
<dbReference type="Proteomes" id="UP000001692">
    <property type="component" value="Chromosome 1"/>
</dbReference>
<dbReference type="GO" id="GO:0005886">
    <property type="term" value="C:plasma membrane"/>
    <property type="evidence" value="ECO:0007669"/>
    <property type="project" value="UniProtKB-SubCell"/>
</dbReference>
<dbReference type="GO" id="GO:0015138">
    <property type="term" value="F:fumarate transmembrane transporter activity"/>
    <property type="evidence" value="ECO:0007669"/>
    <property type="project" value="TreeGrafter"/>
</dbReference>
<dbReference type="GO" id="GO:0015366">
    <property type="term" value="F:malate:proton symporter activity"/>
    <property type="evidence" value="ECO:0007669"/>
    <property type="project" value="TreeGrafter"/>
</dbReference>
<dbReference type="GO" id="GO:0015141">
    <property type="term" value="F:succinate transmembrane transporter activity"/>
    <property type="evidence" value="ECO:0007669"/>
    <property type="project" value="TreeGrafter"/>
</dbReference>
<dbReference type="GO" id="GO:0070778">
    <property type="term" value="P:L-aspartate transmembrane transport"/>
    <property type="evidence" value="ECO:0007669"/>
    <property type="project" value="TreeGrafter"/>
</dbReference>
<dbReference type="FunFam" id="1.10.3860.10:FF:000001">
    <property type="entry name" value="C4-dicarboxylate transport protein"/>
    <property type="match status" value="1"/>
</dbReference>
<dbReference type="Gene3D" id="1.10.3860.10">
    <property type="entry name" value="Sodium:dicarboxylate symporter"/>
    <property type="match status" value="1"/>
</dbReference>
<dbReference type="HAMAP" id="MF_01300">
    <property type="entry name" value="C4_dicarb_transport"/>
    <property type="match status" value="1"/>
</dbReference>
<dbReference type="InterPro" id="IPR023954">
    <property type="entry name" value="C4_dicarb_transport"/>
</dbReference>
<dbReference type="InterPro" id="IPR001991">
    <property type="entry name" value="Na-dicarboxylate_symporter"/>
</dbReference>
<dbReference type="InterPro" id="IPR018107">
    <property type="entry name" value="Na-dicarboxylate_symporter_CS"/>
</dbReference>
<dbReference type="InterPro" id="IPR036458">
    <property type="entry name" value="Na:dicarbo_symporter_sf"/>
</dbReference>
<dbReference type="NCBIfam" id="NF002461">
    <property type="entry name" value="PRK01663.1"/>
    <property type="match status" value="1"/>
</dbReference>
<dbReference type="NCBIfam" id="NF009587">
    <property type="entry name" value="PRK13027.1"/>
    <property type="match status" value="1"/>
</dbReference>
<dbReference type="PANTHER" id="PTHR42865:SF1">
    <property type="entry name" value="AEROBIC C4-DICARBOXYLATE TRANSPORT PROTEIN"/>
    <property type="match status" value="1"/>
</dbReference>
<dbReference type="PANTHER" id="PTHR42865">
    <property type="entry name" value="PROTON/GLUTAMATE-ASPARTATE SYMPORTER"/>
    <property type="match status" value="1"/>
</dbReference>
<dbReference type="Pfam" id="PF00375">
    <property type="entry name" value="SDF"/>
    <property type="match status" value="1"/>
</dbReference>
<dbReference type="PRINTS" id="PR00173">
    <property type="entry name" value="EDTRNSPORT"/>
</dbReference>
<dbReference type="SUPFAM" id="SSF118215">
    <property type="entry name" value="Proton glutamate symport protein"/>
    <property type="match status" value="1"/>
</dbReference>
<dbReference type="PROSITE" id="PS00713">
    <property type="entry name" value="NA_DICARBOXYL_SYMP_1"/>
    <property type="match status" value="1"/>
</dbReference>
<dbReference type="PROSITE" id="PS00714">
    <property type="entry name" value="NA_DICARBOXYL_SYMP_2"/>
    <property type="match status" value="1"/>
</dbReference>